<name>MACB_NITWN</name>
<dbReference type="EC" id="7.6.2.-" evidence="1"/>
<dbReference type="EMBL" id="CP000115">
    <property type="protein sequence ID" value="ABA05300.1"/>
    <property type="molecule type" value="Genomic_DNA"/>
</dbReference>
<dbReference type="RefSeq" id="WP_011315283.1">
    <property type="nucleotide sequence ID" value="NC_007406.1"/>
</dbReference>
<dbReference type="SMR" id="Q3SQZ1"/>
<dbReference type="STRING" id="323098.Nwi_2041"/>
<dbReference type="KEGG" id="nwi:Nwi_2041"/>
<dbReference type="eggNOG" id="COG0577">
    <property type="taxonomic scope" value="Bacteria"/>
</dbReference>
<dbReference type="eggNOG" id="COG1136">
    <property type="taxonomic scope" value="Bacteria"/>
</dbReference>
<dbReference type="HOGENOM" id="CLU_000604_78_2_5"/>
<dbReference type="OrthoDB" id="9786950at2"/>
<dbReference type="Proteomes" id="UP000002531">
    <property type="component" value="Chromosome"/>
</dbReference>
<dbReference type="GO" id="GO:0005886">
    <property type="term" value="C:plasma membrane"/>
    <property type="evidence" value="ECO:0007669"/>
    <property type="project" value="UniProtKB-SubCell"/>
</dbReference>
<dbReference type="GO" id="GO:0005524">
    <property type="term" value="F:ATP binding"/>
    <property type="evidence" value="ECO:0007669"/>
    <property type="project" value="UniProtKB-KW"/>
</dbReference>
<dbReference type="GO" id="GO:0016887">
    <property type="term" value="F:ATP hydrolysis activity"/>
    <property type="evidence" value="ECO:0007669"/>
    <property type="project" value="InterPro"/>
</dbReference>
<dbReference type="GO" id="GO:0022857">
    <property type="term" value="F:transmembrane transporter activity"/>
    <property type="evidence" value="ECO:0007669"/>
    <property type="project" value="TreeGrafter"/>
</dbReference>
<dbReference type="GO" id="GO:0046677">
    <property type="term" value="P:response to antibiotic"/>
    <property type="evidence" value="ECO:0007669"/>
    <property type="project" value="UniProtKB-KW"/>
</dbReference>
<dbReference type="CDD" id="cd03255">
    <property type="entry name" value="ABC_MJ0796_LolCDE_FtsE"/>
    <property type="match status" value="1"/>
</dbReference>
<dbReference type="FunFam" id="3.40.50.300:FF:000032">
    <property type="entry name" value="Export ABC transporter ATP-binding protein"/>
    <property type="match status" value="1"/>
</dbReference>
<dbReference type="Gene3D" id="3.40.50.300">
    <property type="entry name" value="P-loop containing nucleotide triphosphate hydrolases"/>
    <property type="match status" value="1"/>
</dbReference>
<dbReference type="InterPro" id="IPR003593">
    <property type="entry name" value="AAA+_ATPase"/>
</dbReference>
<dbReference type="InterPro" id="IPR003838">
    <property type="entry name" value="ABC3_permease_C"/>
</dbReference>
<dbReference type="InterPro" id="IPR003439">
    <property type="entry name" value="ABC_transporter-like_ATP-bd"/>
</dbReference>
<dbReference type="InterPro" id="IPR017871">
    <property type="entry name" value="ABC_transporter-like_CS"/>
</dbReference>
<dbReference type="InterPro" id="IPR017911">
    <property type="entry name" value="MacB-like_ATP-bd"/>
</dbReference>
<dbReference type="InterPro" id="IPR025857">
    <property type="entry name" value="MacB_PCD"/>
</dbReference>
<dbReference type="InterPro" id="IPR050250">
    <property type="entry name" value="Macrolide_Exporter_MacB"/>
</dbReference>
<dbReference type="InterPro" id="IPR027417">
    <property type="entry name" value="P-loop_NTPase"/>
</dbReference>
<dbReference type="PANTHER" id="PTHR30572:SF14">
    <property type="entry name" value="MACROLIDE EXPORT ATP-BINDING_PERMEASE PROTEIN MACB"/>
    <property type="match status" value="1"/>
</dbReference>
<dbReference type="PANTHER" id="PTHR30572">
    <property type="entry name" value="MEMBRANE COMPONENT OF TRANSPORTER-RELATED"/>
    <property type="match status" value="1"/>
</dbReference>
<dbReference type="Pfam" id="PF00005">
    <property type="entry name" value="ABC_tran"/>
    <property type="match status" value="1"/>
</dbReference>
<dbReference type="Pfam" id="PF02687">
    <property type="entry name" value="FtsX"/>
    <property type="match status" value="1"/>
</dbReference>
<dbReference type="Pfam" id="PF12704">
    <property type="entry name" value="MacB_PCD"/>
    <property type="match status" value="1"/>
</dbReference>
<dbReference type="SMART" id="SM00382">
    <property type="entry name" value="AAA"/>
    <property type="match status" value="1"/>
</dbReference>
<dbReference type="SUPFAM" id="SSF52540">
    <property type="entry name" value="P-loop containing nucleoside triphosphate hydrolases"/>
    <property type="match status" value="1"/>
</dbReference>
<dbReference type="PROSITE" id="PS00211">
    <property type="entry name" value="ABC_TRANSPORTER_1"/>
    <property type="match status" value="1"/>
</dbReference>
<dbReference type="PROSITE" id="PS50893">
    <property type="entry name" value="ABC_TRANSPORTER_2"/>
    <property type="match status" value="1"/>
</dbReference>
<dbReference type="PROSITE" id="PS51267">
    <property type="entry name" value="MACB"/>
    <property type="match status" value="1"/>
</dbReference>
<comment type="function">
    <text evidence="1">Non-canonical ABC transporter that contains transmembrane domains (TMD), which form a pore in the inner membrane, and an ATP-binding domain (NBD), which is responsible for energy generation. Confers resistance against macrolides.</text>
</comment>
<comment type="subunit">
    <text evidence="1">Homodimer.</text>
</comment>
<comment type="subcellular location">
    <subcellularLocation>
        <location evidence="1">Cell inner membrane</location>
        <topology evidence="1">Multi-pass membrane protein</topology>
    </subcellularLocation>
</comment>
<comment type="similarity">
    <text evidence="1">Belongs to the ABC transporter superfamily. Macrolide exporter (TC 3.A.1.122) family.</text>
</comment>
<gene>
    <name evidence="1" type="primary">macB</name>
    <name type="ordered locus">Nwi_2041</name>
</gene>
<keyword id="KW-0046">Antibiotic resistance</keyword>
<keyword id="KW-0067">ATP-binding</keyword>
<keyword id="KW-0997">Cell inner membrane</keyword>
<keyword id="KW-1003">Cell membrane</keyword>
<keyword id="KW-0472">Membrane</keyword>
<keyword id="KW-0547">Nucleotide-binding</keyword>
<keyword id="KW-1185">Reference proteome</keyword>
<keyword id="KW-1278">Translocase</keyword>
<keyword id="KW-0812">Transmembrane</keyword>
<keyword id="KW-1133">Transmembrane helix</keyword>
<keyword id="KW-0813">Transport</keyword>
<feature type="chain" id="PRO_0000269951" description="Macrolide export ATP-binding/permease protein MacB">
    <location>
        <begin position="1"/>
        <end position="645"/>
    </location>
</feature>
<feature type="transmembrane region" description="Helical" evidence="1">
    <location>
        <begin position="274"/>
        <end position="294"/>
    </location>
</feature>
<feature type="transmembrane region" description="Helical" evidence="1">
    <location>
        <begin position="526"/>
        <end position="546"/>
    </location>
</feature>
<feature type="transmembrane region" description="Helical" evidence="1">
    <location>
        <begin position="574"/>
        <end position="594"/>
    </location>
</feature>
<feature type="transmembrane region" description="Helical" evidence="1">
    <location>
        <begin position="596"/>
        <end position="616"/>
    </location>
</feature>
<feature type="domain" description="ABC transporter" evidence="1">
    <location>
        <begin position="6"/>
        <end position="244"/>
    </location>
</feature>
<feature type="binding site" evidence="1">
    <location>
        <begin position="42"/>
        <end position="49"/>
    </location>
    <ligand>
        <name>ATP</name>
        <dbReference type="ChEBI" id="CHEBI:30616"/>
    </ligand>
</feature>
<protein>
    <recommendedName>
        <fullName evidence="1">Macrolide export ATP-binding/permease protein MacB</fullName>
        <ecNumber evidence="1">7.6.2.-</ecNumber>
    </recommendedName>
</protein>
<reference key="1">
    <citation type="journal article" date="2006" name="Appl. Environ. Microbiol.">
        <title>Genome sequence of the chemolithoautotrophic nitrite-oxidizing bacterium Nitrobacter winogradskyi Nb-255.</title>
        <authorList>
            <person name="Starkenburg S.R."/>
            <person name="Chain P.S.G."/>
            <person name="Sayavedra-Soto L.A."/>
            <person name="Hauser L."/>
            <person name="Land M.L."/>
            <person name="Larimer F.W."/>
            <person name="Malfatti S.A."/>
            <person name="Klotz M.G."/>
            <person name="Bottomley P.J."/>
            <person name="Arp D.J."/>
            <person name="Hickey W.J."/>
        </authorList>
    </citation>
    <scope>NUCLEOTIDE SEQUENCE [LARGE SCALE GENOMIC DNA]</scope>
    <source>
        <strain>ATCC 25391 / DSM 10237 / CIP 104748 / NCIMB 11846 / Nb-255</strain>
    </source>
</reference>
<organism>
    <name type="scientific">Nitrobacter winogradskyi (strain ATCC 25391 / DSM 10237 / CIP 104748 / NCIMB 11846 / Nb-255)</name>
    <dbReference type="NCBI Taxonomy" id="323098"/>
    <lineage>
        <taxon>Bacteria</taxon>
        <taxon>Pseudomonadati</taxon>
        <taxon>Pseudomonadota</taxon>
        <taxon>Alphaproteobacteria</taxon>
        <taxon>Hyphomicrobiales</taxon>
        <taxon>Nitrobacteraceae</taxon>
        <taxon>Nitrobacter</taxon>
    </lineage>
</organism>
<proteinExistence type="inferred from homology"/>
<sequence length="645" mass="68174">MTPPLIELEGIRRSYRSGDVVTHALRGVGLSIHAGEFVAIIGASGSGKSTLMNIIGLMDRPSDGAYRFGGRDVATLNRDELAALRRGCFGFIFQNYHLIPTVSALGNVEMPAIHAGAPRAYRHRRATALLTRLGLANRITNRPSQLSGGQQQRVSIARALMNGGAVILADEPTGALDSKSGTEVLGILKKLAGDGHTVILITHDSKVAAAAERIIRIEDGLIVSDSGPDPEKVSSSIAVVPWQASDSSPPLWTWLEEAARSAFAALAINPVRTALTLSGIVIGVASVVAMMAIGRGAQASYIERASAIGTNWIVVDRAGESTGNSLPLTPADAQAIKDMDNVSGSMPAMWDMATMRRGNIDLNTDVVATTAEFRTVHNWDMAKGTFFTKQDEVSGGPVVLLGATLASKLFPGIADPSGSNILINNLPFLVTGVLESKGLSERGTDRDKRAVMPLRTATMRLFGKDDLSEIVVSIADMSRLHETKEAIKALLIRRHGREDFYIYDSASAFQKAEDERRSSNLLLSAIAAISMLVGGIGIMNIMLITVSERTREIGVRTAIGARTADILGQFLTEAVVLAAIGGVVGLLLGAVIGVGAALLFGMTVIFSVTMALGALMGAVVMGTVFGFMPAYRAARLKPIEALARG</sequence>
<accession>Q3SQZ1</accession>
<evidence type="ECO:0000255" key="1">
    <source>
        <dbReference type="HAMAP-Rule" id="MF_01720"/>
    </source>
</evidence>